<comment type="function">
    <text evidence="1">Phosphorolytic 3'-5' exoribonuclease that plays an important role in tRNA 3'-end maturation. Removes nucleotide residues following the 3'-CCA terminus of tRNAs; can also add nucleotides to the ends of RNA molecules by using nucleoside diphosphates as substrates, but this may not be physiologically important. Probably plays a role in initiation of 16S rRNA degradation (leading to ribosome degradation) during starvation.</text>
</comment>
<comment type="catalytic activity">
    <reaction evidence="1">
        <text>tRNA(n+1) + phosphate = tRNA(n) + a ribonucleoside 5'-diphosphate</text>
        <dbReference type="Rhea" id="RHEA:10628"/>
        <dbReference type="Rhea" id="RHEA-COMP:17343"/>
        <dbReference type="Rhea" id="RHEA-COMP:17344"/>
        <dbReference type="ChEBI" id="CHEBI:43474"/>
        <dbReference type="ChEBI" id="CHEBI:57930"/>
        <dbReference type="ChEBI" id="CHEBI:173114"/>
        <dbReference type="EC" id="2.7.7.56"/>
    </reaction>
</comment>
<comment type="subunit">
    <text evidence="1">Homohexameric ring arranged as a trimer of dimers.</text>
</comment>
<comment type="similarity">
    <text evidence="1">Belongs to the RNase PH family.</text>
</comment>
<feature type="chain" id="PRO_0000139921" description="Ribonuclease PH">
    <location>
        <begin position="1"/>
        <end position="238"/>
    </location>
</feature>
<feature type="binding site" evidence="1">
    <location>
        <position position="86"/>
    </location>
    <ligand>
        <name>phosphate</name>
        <dbReference type="ChEBI" id="CHEBI:43474"/>
        <note>substrate</note>
    </ligand>
</feature>
<feature type="binding site" evidence="1">
    <location>
        <begin position="124"/>
        <end position="126"/>
    </location>
    <ligand>
        <name>phosphate</name>
        <dbReference type="ChEBI" id="CHEBI:43474"/>
        <note>substrate</note>
    </ligand>
</feature>
<accession>Q6LVN8</accession>
<dbReference type="EC" id="2.7.7.56" evidence="1"/>
<dbReference type="EMBL" id="CR378663">
    <property type="protein sequence ID" value="CAG18637.1"/>
    <property type="molecule type" value="Genomic_DNA"/>
</dbReference>
<dbReference type="RefSeq" id="WP_006233313.1">
    <property type="nucleotide sequence ID" value="NC_006370.1"/>
</dbReference>
<dbReference type="SMR" id="Q6LVN8"/>
<dbReference type="STRING" id="298386.PBPRA0198"/>
<dbReference type="KEGG" id="ppr:PBPRA0198"/>
<dbReference type="eggNOG" id="COG0689">
    <property type="taxonomic scope" value="Bacteria"/>
</dbReference>
<dbReference type="HOGENOM" id="CLU_050858_0_0_6"/>
<dbReference type="Proteomes" id="UP000000593">
    <property type="component" value="Chromosome 1"/>
</dbReference>
<dbReference type="GO" id="GO:0000175">
    <property type="term" value="F:3'-5'-RNA exonuclease activity"/>
    <property type="evidence" value="ECO:0007669"/>
    <property type="project" value="UniProtKB-UniRule"/>
</dbReference>
<dbReference type="GO" id="GO:0000049">
    <property type="term" value="F:tRNA binding"/>
    <property type="evidence" value="ECO:0007669"/>
    <property type="project" value="UniProtKB-UniRule"/>
</dbReference>
<dbReference type="GO" id="GO:0009022">
    <property type="term" value="F:tRNA nucleotidyltransferase activity"/>
    <property type="evidence" value="ECO:0007669"/>
    <property type="project" value="UniProtKB-UniRule"/>
</dbReference>
<dbReference type="GO" id="GO:0016075">
    <property type="term" value="P:rRNA catabolic process"/>
    <property type="evidence" value="ECO:0007669"/>
    <property type="project" value="UniProtKB-UniRule"/>
</dbReference>
<dbReference type="GO" id="GO:0006364">
    <property type="term" value="P:rRNA processing"/>
    <property type="evidence" value="ECO:0007669"/>
    <property type="project" value="UniProtKB-KW"/>
</dbReference>
<dbReference type="GO" id="GO:0008033">
    <property type="term" value="P:tRNA processing"/>
    <property type="evidence" value="ECO:0007669"/>
    <property type="project" value="UniProtKB-UniRule"/>
</dbReference>
<dbReference type="CDD" id="cd11362">
    <property type="entry name" value="RNase_PH_bact"/>
    <property type="match status" value="1"/>
</dbReference>
<dbReference type="FunFam" id="3.30.230.70:FF:000003">
    <property type="entry name" value="Ribonuclease PH"/>
    <property type="match status" value="1"/>
</dbReference>
<dbReference type="Gene3D" id="3.30.230.70">
    <property type="entry name" value="GHMP Kinase, N-terminal domain"/>
    <property type="match status" value="1"/>
</dbReference>
<dbReference type="HAMAP" id="MF_00564">
    <property type="entry name" value="RNase_PH"/>
    <property type="match status" value="1"/>
</dbReference>
<dbReference type="InterPro" id="IPR001247">
    <property type="entry name" value="ExoRNase_PH_dom1"/>
</dbReference>
<dbReference type="InterPro" id="IPR015847">
    <property type="entry name" value="ExoRNase_PH_dom2"/>
</dbReference>
<dbReference type="InterPro" id="IPR036345">
    <property type="entry name" value="ExoRNase_PH_dom2_sf"/>
</dbReference>
<dbReference type="InterPro" id="IPR027408">
    <property type="entry name" value="PNPase/RNase_PH_dom_sf"/>
</dbReference>
<dbReference type="InterPro" id="IPR020568">
    <property type="entry name" value="Ribosomal_Su5_D2-typ_SF"/>
</dbReference>
<dbReference type="InterPro" id="IPR050080">
    <property type="entry name" value="RNase_PH"/>
</dbReference>
<dbReference type="InterPro" id="IPR002381">
    <property type="entry name" value="RNase_PH_bac-type"/>
</dbReference>
<dbReference type="InterPro" id="IPR018336">
    <property type="entry name" value="RNase_PH_CS"/>
</dbReference>
<dbReference type="NCBIfam" id="TIGR01966">
    <property type="entry name" value="RNasePH"/>
    <property type="match status" value="1"/>
</dbReference>
<dbReference type="PANTHER" id="PTHR11953">
    <property type="entry name" value="EXOSOME COMPLEX COMPONENT"/>
    <property type="match status" value="1"/>
</dbReference>
<dbReference type="PANTHER" id="PTHR11953:SF0">
    <property type="entry name" value="EXOSOME COMPLEX COMPONENT RRP41"/>
    <property type="match status" value="1"/>
</dbReference>
<dbReference type="Pfam" id="PF01138">
    <property type="entry name" value="RNase_PH"/>
    <property type="match status" value="1"/>
</dbReference>
<dbReference type="Pfam" id="PF03725">
    <property type="entry name" value="RNase_PH_C"/>
    <property type="match status" value="1"/>
</dbReference>
<dbReference type="SUPFAM" id="SSF55666">
    <property type="entry name" value="Ribonuclease PH domain 2-like"/>
    <property type="match status" value="1"/>
</dbReference>
<dbReference type="SUPFAM" id="SSF54211">
    <property type="entry name" value="Ribosomal protein S5 domain 2-like"/>
    <property type="match status" value="1"/>
</dbReference>
<dbReference type="PROSITE" id="PS01277">
    <property type="entry name" value="RIBONUCLEASE_PH"/>
    <property type="match status" value="1"/>
</dbReference>
<organism>
    <name type="scientific">Photobacterium profundum (strain SS9)</name>
    <dbReference type="NCBI Taxonomy" id="298386"/>
    <lineage>
        <taxon>Bacteria</taxon>
        <taxon>Pseudomonadati</taxon>
        <taxon>Pseudomonadota</taxon>
        <taxon>Gammaproteobacteria</taxon>
        <taxon>Vibrionales</taxon>
        <taxon>Vibrionaceae</taxon>
        <taxon>Photobacterium</taxon>
    </lineage>
</organism>
<sequence length="238" mass="25563">MRPSGRSTSQVRPITITRNFTAHAEGSVLVEFGDTKVICTASVEENVPRWLKGKGQGWVTAEYGMLPRATHTRNRREASSGKQGGRTMEIQRLIARSLRAAVDLEALGEQMITVDCDVIQADGGTRTASITGAMVALVDAVNSMIEKGTLKKSPIKGMVAAVSVGIYKGEAICDLEYLEDSAAETDMNVVMTEEGKMIEIQGTAEGEAFSHEELLAMLALAKDGIADIVTMQKQALES</sequence>
<name>RNPH_PHOPR</name>
<proteinExistence type="inferred from homology"/>
<reference key="1">
    <citation type="journal article" date="2005" name="Science">
        <title>Life at depth: Photobacterium profundum genome sequence and expression analysis.</title>
        <authorList>
            <person name="Vezzi A."/>
            <person name="Campanaro S."/>
            <person name="D'Angelo M."/>
            <person name="Simonato F."/>
            <person name="Vitulo N."/>
            <person name="Lauro F.M."/>
            <person name="Cestaro A."/>
            <person name="Malacrida G."/>
            <person name="Simionati B."/>
            <person name="Cannata N."/>
            <person name="Romualdi C."/>
            <person name="Bartlett D.H."/>
            <person name="Valle G."/>
        </authorList>
    </citation>
    <scope>NUCLEOTIDE SEQUENCE [LARGE SCALE GENOMIC DNA]</scope>
    <source>
        <strain>ATCC BAA-1253 / SS9</strain>
    </source>
</reference>
<gene>
    <name evidence="1" type="primary">rph</name>
    <name type="ordered locus">PBPRA0198</name>
</gene>
<protein>
    <recommendedName>
        <fullName evidence="1">Ribonuclease PH</fullName>
        <shortName evidence="1">RNase PH</shortName>
        <ecNumber evidence="1">2.7.7.56</ecNumber>
    </recommendedName>
    <alternativeName>
        <fullName evidence="1">tRNA nucleotidyltransferase</fullName>
    </alternativeName>
</protein>
<evidence type="ECO:0000255" key="1">
    <source>
        <dbReference type="HAMAP-Rule" id="MF_00564"/>
    </source>
</evidence>
<keyword id="KW-0548">Nucleotidyltransferase</keyword>
<keyword id="KW-1185">Reference proteome</keyword>
<keyword id="KW-0694">RNA-binding</keyword>
<keyword id="KW-0698">rRNA processing</keyword>
<keyword id="KW-0808">Transferase</keyword>
<keyword id="KW-0819">tRNA processing</keyword>
<keyword id="KW-0820">tRNA-binding</keyword>